<keyword id="KW-0472">Membrane</keyword>
<keyword id="KW-1185">Reference proteome</keyword>
<keyword id="KW-0812">Transmembrane</keyword>
<keyword id="KW-1133">Transmembrane helix</keyword>
<evidence type="ECO:0000255" key="1"/>
<evidence type="ECO:0000305" key="2"/>
<dbReference type="EMBL" id="Z38060">
    <property type="protein sequence ID" value="CAA86163.1"/>
    <property type="molecule type" value="Genomic_DNA"/>
</dbReference>
<dbReference type="EMBL" id="AY692629">
    <property type="protein sequence ID" value="AAT92648.1"/>
    <property type="molecule type" value="Genomic_DNA"/>
</dbReference>
<dbReference type="EMBL" id="BK006942">
    <property type="protein sequence ID" value="DAA08490.1"/>
    <property type="molecule type" value="Genomic_DNA"/>
</dbReference>
<dbReference type="PIR" id="S48419">
    <property type="entry name" value="S48419"/>
</dbReference>
<dbReference type="RefSeq" id="NP_012204.3">
    <property type="nucleotide sequence ID" value="NM_001179410.3"/>
</dbReference>
<dbReference type="BioGRID" id="34932">
    <property type="interactions" value="15"/>
</dbReference>
<dbReference type="DIP" id="DIP-4109N"/>
<dbReference type="FunCoup" id="P40519">
    <property type="interactions" value="43"/>
</dbReference>
<dbReference type="MINT" id="P40519"/>
<dbReference type="STRING" id="4932.YIL060W"/>
<dbReference type="PaxDb" id="4932-YIL060W"/>
<dbReference type="PeptideAtlas" id="P40519"/>
<dbReference type="EnsemblFungi" id="YIL060W_mRNA">
    <property type="protein sequence ID" value="YIL060W"/>
    <property type="gene ID" value="YIL060W"/>
</dbReference>
<dbReference type="GeneID" id="854750"/>
<dbReference type="KEGG" id="sce:YIL060W"/>
<dbReference type="AGR" id="SGD:S000001322"/>
<dbReference type="SGD" id="S000001322">
    <property type="gene designation" value="YIL060W"/>
</dbReference>
<dbReference type="VEuPathDB" id="FungiDB:YIL060W"/>
<dbReference type="GeneTree" id="ENSGT00940000178779"/>
<dbReference type="HOGENOM" id="CLU_1797959_0_0_1"/>
<dbReference type="InParanoid" id="P40519"/>
<dbReference type="OrthoDB" id="4071477at2759"/>
<dbReference type="BioCyc" id="YEAST:G3O-31328-MONOMER"/>
<dbReference type="BioGRID-ORCS" id="854750">
    <property type="hits" value="6 hits in 10 CRISPR screens"/>
</dbReference>
<dbReference type="PRO" id="PR:P40519"/>
<dbReference type="Proteomes" id="UP000002311">
    <property type="component" value="Chromosome IX"/>
</dbReference>
<dbReference type="RNAct" id="P40519">
    <property type="molecule type" value="protein"/>
</dbReference>
<dbReference type="GO" id="GO:0016020">
    <property type="term" value="C:membrane"/>
    <property type="evidence" value="ECO:0007669"/>
    <property type="project" value="UniProtKB-SubCell"/>
</dbReference>
<dbReference type="GO" id="GO:0005739">
    <property type="term" value="C:mitochondrion"/>
    <property type="evidence" value="ECO:0000314"/>
    <property type="project" value="SGD"/>
</dbReference>
<comment type="subcellular location">
    <subcellularLocation>
        <location evidence="2">Membrane</location>
        <topology evidence="2">Single-pass membrane protein</topology>
    </subcellularLocation>
</comment>
<comment type="similarity">
    <text evidence="2">To yeast YCL21w.</text>
</comment>
<gene>
    <name type="ordered locus">YIL060W</name>
</gene>
<proteinExistence type="predicted"/>
<name>YIG0_YEAST</name>
<sequence>MMIIIFIELCRIADSLLWIPKSSRRTSSTFYIPNIIALLKMESQQLSQNSPTLHIHTCGSKIGTLFLRFTKVAIGTSLIVGAGVAMEVSVPLPPQPLYSRSEVPSVELCGIVAICRSPPSVYPTCRPISLSKKIVSGLVRTNSS</sequence>
<reference key="1">
    <citation type="journal article" date="1997" name="Nature">
        <title>The nucleotide sequence of Saccharomyces cerevisiae chromosome IX.</title>
        <authorList>
            <person name="Churcher C.M."/>
            <person name="Bowman S."/>
            <person name="Badcock K."/>
            <person name="Bankier A.T."/>
            <person name="Brown D."/>
            <person name="Chillingworth T."/>
            <person name="Connor R."/>
            <person name="Devlin K."/>
            <person name="Gentles S."/>
            <person name="Hamlin N."/>
            <person name="Harris D.E."/>
            <person name="Horsnell T."/>
            <person name="Hunt S."/>
            <person name="Jagels K."/>
            <person name="Jones M."/>
            <person name="Lye G."/>
            <person name="Moule S."/>
            <person name="Odell C."/>
            <person name="Pearson D."/>
            <person name="Rajandream M.A."/>
            <person name="Rice P."/>
            <person name="Rowley N."/>
            <person name="Skelton J."/>
            <person name="Smith V."/>
            <person name="Walsh S.V."/>
            <person name="Whitehead S."/>
            <person name="Barrell B.G."/>
        </authorList>
    </citation>
    <scope>NUCLEOTIDE SEQUENCE [LARGE SCALE GENOMIC DNA]</scope>
    <source>
        <strain>ATCC 204508 / S288c</strain>
    </source>
</reference>
<reference key="2">
    <citation type="journal article" date="2014" name="G3 (Bethesda)">
        <title>The reference genome sequence of Saccharomyces cerevisiae: Then and now.</title>
        <authorList>
            <person name="Engel S.R."/>
            <person name="Dietrich F.S."/>
            <person name="Fisk D.G."/>
            <person name="Binkley G."/>
            <person name="Balakrishnan R."/>
            <person name="Costanzo M.C."/>
            <person name="Dwight S.S."/>
            <person name="Hitz B.C."/>
            <person name="Karra K."/>
            <person name="Nash R.S."/>
            <person name="Weng S."/>
            <person name="Wong E.D."/>
            <person name="Lloyd P."/>
            <person name="Skrzypek M.S."/>
            <person name="Miyasato S.R."/>
            <person name="Simison M."/>
            <person name="Cherry J.M."/>
        </authorList>
    </citation>
    <scope>GENOME REANNOTATION</scope>
    <source>
        <strain>ATCC 204508 / S288c</strain>
    </source>
</reference>
<reference key="3">
    <citation type="journal article" date="2007" name="Genome Res.">
        <title>Approaching a complete repository of sequence-verified protein-encoding clones for Saccharomyces cerevisiae.</title>
        <authorList>
            <person name="Hu Y."/>
            <person name="Rolfs A."/>
            <person name="Bhullar B."/>
            <person name="Murthy T.V.S."/>
            <person name="Zhu C."/>
            <person name="Berger M.F."/>
            <person name="Camargo A.A."/>
            <person name="Kelley F."/>
            <person name="McCarron S."/>
            <person name="Jepson D."/>
            <person name="Richardson A."/>
            <person name="Raphael J."/>
            <person name="Moreira D."/>
            <person name="Taycher E."/>
            <person name="Zuo D."/>
            <person name="Mohr S."/>
            <person name="Kane M.F."/>
            <person name="Williamson J."/>
            <person name="Simpson A.J.G."/>
            <person name="Bulyk M.L."/>
            <person name="Harlow E."/>
            <person name="Marsischky G."/>
            <person name="Kolodner R.D."/>
            <person name="LaBaer J."/>
        </authorList>
    </citation>
    <scope>NUCLEOTIDE SEQUENCE [GENOMIC DNA]</scope>
    <source>
        <strain>ATCC 204508 / S288c</strain>
    </source>
</reference>
<protein>
    <recommendedName>
        <fullName>Uncharacterized protein YIL060W</fullName>
    </recommendedName>
</protein>
<accession>P40519</accession>
<accession>D6VVM4</accession>
<organism>
    <name type="scientific">Saccharomyces cerevisiae (strain ATCC 204508 / S288c)</name>
    <name type="common">Baker's yeast</name>
    <dbReference type="NCBI Taxonomy" id="559292"/>
    <lineage>
        <taxon>Eukaryota</taxon>
        <taxon>Fungi</taxon>
        <taxon>Dikarya</taxon>
        <taxon>Ascomycota</taxon>
        <taxon>Saccharomycotina</taxon>
        <taxon>Saccharomycetes</taxon>
        <taxon>Saccharomycetales</taxon>
        <taxon>Saccharomycetaceae</taxon>
        <taxon>Saccharomyces</taxon>
    </lineage>
</organism>
<feature type="chain" id="PRO_0000202984" description="Uncharacterized protein YIL060W">
    <location>
        <begin position="1"/>
        <end position="144"/>
    </location>
</feature>
<feature type="transmembrane region" description="Helical" evidence="1">
    <location>
        <begin position="72"/>
        <end position="90"/>
    </location>
</feature>